<feature type="chain" id="PRO_1000191521" description="Tetraacyldisaccharide 4'-kinase">
    <location>
        <begin position="1"/>
        <end position="341"/>
    </location>
</feature>
<feature type="binding site" evidence="1">
    <location>
        <begin position="54"/>
        <end position="61"/>
    </location>
    <ligand>
        <name>ATP</name>
        <dbReference type="ChEBI" id="CHEBI:30616"/>
    </ligand>
</feature>
<accession>B2SD13</accession>
<reference key="1">
    <citation type="journal article" date="2008" name="PLoS ONE">
        <title>Genome sequence of Brucella abortus vaccine strain S19 compared to virulent strains yields candidate virulence genes.</title>
        <authorList>
            <person name="Crasta O.R."/>
            <person name="Folkerts O."/>
            <person name="Fei Z."/>
            <person name="Mane S.P."/>
            <person name="Evans C."/>
            <person name="Martino-Catt S."/>
            <person name="Bricker B."/>
            <person name="Yu G."/>
            <person name="Du L."/>
            <person name="Sobral B.W."/>
        </authorList>
    </citation>
    <scope>NUCLEOTIDE SEQUENCE [LARGE SCALE GENOMIC DNA]</scope>
    <source>
        <strain>S19</strain>
    </source>
</reference>
<comment type="function">
    <text evidence="1">Transfers the gamma-phosphate of ATP to the 4'-position of a tetraacyldisaccharide 1-phosphate intermediate (termed DS-1-P) to form tetraacyldisaccharide 1,4'-bis-phosphate (lipid IVA).</text>
</comment>
<comment type="catalytic activity">
    <reaction evidence="1">
        <text>a lipid A disaccharide + ATP = a lipid IVA + ADP + H(+)</text>
        <dbReference type="Rhea" id="RHEA:67840"/>
        <dbReference type="ChEBI" id="CHEBI:15378"/>
        <dbReference type="ChEBI" id="CHEBI:30616"/>
        <dbReference type="ChEBI" id="CHEBI:176343"/>
        <dbReference type="ChEBI" id="CHEBI:176425"/>
        <dbReference type="ChEBI" id="CHEBI:456216"/>
        <dbReference type="EC" id="2.7.1.130"/>
    </reaction>
</comment>
<comment type="pathway">
    <text evidence="1">Glycolipid biosynthesis; lipid IV(A) biosynthesis; lipid IV(A) from (3R)-3-hydroxytetradecanoyl-[acyl-carrier-protein] and UDP-N-acetyl-alpha-D-glucosamine: step 6/6.</text>
</comment>
<comment type="similarity">
    <text evidence="1">Belongs to the LpxK family.</text>
</comment>
<keyword id="KW-0067">ATP-binding</keyword>
<keyword id="KW-0418">Kinase</keyword>
<keyword id="KW-0441">Lipid A biosynthesis</keyword>
<keyword id="KW-0444">Lipid biosynthesis</keyword>
<keyword id="KW-0443">Lipid metabolism</keyword>
<keyword id="KW-0547">Nucleotide-binding</keyword>
<keyword id="KW-0808">Transferase</keyword>
<sequence>MASEAPPFWWDEPDWRALALAPAAWIYGRVSGRRLIRAVPPRVSLPVLCVGNFTVGGAGKTPTAIAFARGAIARGMKPGIVSRGYGGNYSGLHLVDPGHDGARHVGDEPLLLARHAAVALSPDRVKAAEYLKSLGCDFIIMDDGFQSARLHADFSLLVVDASRGIGNGRVIPAGPLRAPLTDQMRKTDALLCIGKGNGADFVIRQAARAGRPIYHAQLRPSSSATVAGRRWLAFAGIGNPDKFYESVRQAGGEVVETHSFADHYSFEPDDIRGLVDMARRQGLGLITTAKDHVRLATMPGVPPEFLSKLAVLDVDLEFDRTDALDHILDTVVERFKSRLHG</sequence>
<dbReference type="EC" id="2.7.1.130" evidence="1"/>
<dbReference type="EMBL" id="CP000888">
    <property type="protein sequence ID" value="ACD73717.1"/>
    <property type="molecule type" value="Genomic_DNA"/>
</dbReference>
<dbReference type="RefSeq" id="WP_002966366.1">
    <property type="nucleotide sequence ID" value="NC_010740.1"/>
</dbReference>
<dbReference type="SMR" id="B2SD13"/>
<dbReference type="GeneID" id="97535597"/>
<dbReference type="KEGG" id="bmc:BAbS19_II02000"/>
<dbReference type="HOGENOM" id="CLU_038816_0_0_5"/>
<dbReference type="UniPathway" id="UPA00359">
    <property type="reaction ID" value="UER00482"/>
</dbReference>
<dbReference type="Proteomes" id="UP000002565">
    <property type="component" value="Chromosome 2"/>
</dbReference>
<dbReference type="GO" id="GO:0005886">
    <property type="term" value="C:plasma membrane"/>
    <property type="evidence" value="ECO:0007669"/>
    <property type="project" value="TreeGrafter"/>
</dbReference>
<dbReference type="GO" id="GO:0005524">
    <property type="term" value="F:ATP binding"/>
    <property type="evidence" value="ECO:0007669"/>
    <property type="project" value="UniProtKB-UniRule"/>
</dbReference>
<dbReference type="GO" id="GO:0009029">
    <property type="term" value="F:tetraacyldisaccharide 4'-kinase activity"/>
    <property type="evidence" value="ECO:0007669"/>
    <property type="project" value="UniProtKB-UniRule"/>
</dbReference>
<dbReference type="GO" id="GO:0009245">
    <property type="term" value="P:lipid A biosynthetic process"/>
    <property type="evidence" value="ECO:0007669"/>
    <property type="project" value="UniProtKB-UniRule"/>
</dbReference>
<dbReference type="GO" id="GO:0009244">
    <property type="term" value="P:lipopolysaccharide core region biosynthetic process"/>
    <property type="evidence" value="ECO:0007669"/>
    <property type="project" value="TreeGrafter"/>
</dbReference>
<dbReference type="HAMAP" id="MF_00409">
    <property type="entry name" value="LpxK"/>
    <property type="match status" value="1"/>
</dbReference>
<dbReference type="InterPro" id="IPR003758">
    <property type="entry name" value="LpxK"/>
</dbReference>
<dbReference type="InterPro" id="IPR027417">
    <property type="entry name" value="P-loop_NTPase"/>
</dbReference>
<dbReference type="NCBIfam" id="TIGR00682">
    <property type="entry name" value="lpxK"/>
    <property type="match status" value="1"/>
</dbReference>
<dbReference type="PANTHER" id="PTHR42724">
    <property type="entry name" value="TETRAACYLDISACCHARIDE 4'-KINASE"/>
    <property type="match status" value="1"/>
</dbReference>
<dbReference type="PANTHER" id="PTHR42724:SF1">
    <property type="entry name" value="TETRAACYLDISACCHARIDE 4'-KINASE, MITOCHONDRIAL-RELATED"/>
    <property type="match status" value="1"/>
</dbReference>
<dbReference type="Pfam" id="PF02606">
    <property type="entry name" value="LpxK"/>
    <property type="match status" value="1"/>
</dbReference>
<dbReference type="SUPFAM" id="SSF52540">
    <property type="entry name" value="P-loop containing nucleoside triphosphate hydrolases"/>
    <property type="match status" value="1"/>
</dbReference>
<gene>
    <name evidence="1" type="primary">lpxK</name>
    <name type="ordered locus">BAbS19_II02000</name>
</gene>
<organism>
    <name type="scientific">Brucella abortus (strain S19)</name>
    <dbReference type="NCBI Taxonomy" id="430066"/>
    <lineage>
        <taxon>Bacteria</taxon>
        <taxon>Pseudomonadati</taxon>
        <taxon>Pseudomonadota</taxon>
        <taxon>Alphaproteobacteria</taxon>
        <taxon>Hyphomicrobiales</taxon>
        <taxon>Brucellaceae</taxon>
        <taxon>Brucella/Ochrobactrum group</taxon>
        <taxon>Brucella</taxon>
    </lineage>
</organism>
<evidence type="ECO:0000255" key="1">
    <source>
        <dbReference type="HAMAP-Rule" id="MF_00409"/>
    </source>
</evidence>
<protein>
    <recommendedName>
        <fullName evidence="1">Tetraacyldisaccharide 4'-kinase</fullName>
        <ecNumber evidence="1">2.7.1.130</ecNumber>
    </recommendedName>
    <alternativeName>
        <fullName evidence="1">Lipid A 4'-kinase</fullName>
    </alternativeName>
</protein>
<name>LPXK_BRUA1</name>
<proteinExistence type="inferred from homology"/>